<accession>P12796</accession>
<accession>Q26577</accession>
<protein>
    <recommendedName>
        <fullName>Eggshell protein</fullName>
    </recommendedName>
    <alternativeName>
        <fullName>Chorion protein</fullName>
    </alternativeName>
</protein>
<name>EGG2_SCHMA</name>
<organism>
    <name type="scientific">Schistosoma mansoni</name>
    <name type="common">Blood fluke</name>
    <dbReference type="NCBI Taxonomy" id="6183"/>
    <lineage>
        <taxon>Eukaryota</taxon>
        <taxon>Metazoa</taxon>
        <taxon>Spiralia</taxon>
        <taxon>Lophotrochozoa</taxon>
        <taxon>Platyhelminthes</taxon>
        <taxon>Trematoda</taxon>
        <taxon>Digenea</taxon>
        <taxon>Strigeidida</taxon>
        <taxon>Schistosomatoidea</taxon>
        <taxon>Schistosomatidae</taxon>
        <taxon>Schistosoma</taxon>
    </lineage>
</organism>
<keyword id="KW-1185">Reference proteome</keyword>
<keyword id="KW-0677">Repeat</keyword>
<keyword id="KW-0732">Signal</keyword>
<dbReference type="EMBL" id="M21607">
    <property type="protein sequence ID" value="AAA29862.1"/>
    <property type="molecule type" value="Genomic_DNA"/>
</dbReference>
<dbReference type="EMBL" id="M14309">
    <property type="protein sequence ID" value="AAA74695.1"/>
    <property type="molecule type" value="mRNA"/>
</dbReference>
<dbReference type="PIR" id="A31204">
    <property type="entry name" value="A31204"/>
</dbReference>
<dbReference type="EnsemblMetazoa" id="Smp_316140.1">
    <property type="protein sequence ID" value="Smp_316140.1"/>
    <property type="gene ID" value="Smp_316140"/>
</dbReference>
<dbReference type="EnsemblMetazoa" id="Smp_316150.1">
    <property type="protein sequence ID" value="Smp_316150.1"/>
    <property type="gene ID" value="Smp_316150"/>
</dbReference>
<dbReference type="WBParaSite" id="Smp_316140.1">
    <property type="protein sequence ID" value="Smp_316140.1"/>
    <property type="gene ID" value="Smp_316140"/>
</dbReference>
<dbReference type="WBParaSite" id="Smp_316150.1">
    <property type="protein sequence ID" value="Smp_316150.1"/>
    <property type="gene ID" value="Smp_316150"/>
</dbReference>
<dbReference type="InParanoid" id="P12796"/>
<dbReference type="Proteomes" id="UP000008854">
    <property type="component" value="Unassembled WGS sequence"/>
</dbReference>
<dbReference type="PRINTS" id="PR01228">
    <property type="entry name" value="EGGSHELL"/>
</dbReference>
<reference key="1">
    <citation type="journal article" date="1988" name="Mol. Cell. Biol.">
        <title>Small gene family encoding an eggshell (chorion) protein of the human parasite Schistosoma mansoni.</title>
        <authorList>
            <person name="Bobek L.A."/>
            <person name="Rekosh D.M."/>
            <person name="Loverde P.T."/>
        </authorList>
    </citation>
    <scope>NUCLEOTIDE SEQUENCE [GENOMIC DNA]</scope>
</reference>
<reference key="2">
    <citation type="journal article" date="1986" name="Proc. Natl. Acad. Sci. U.S.A.">
        <title>Characterization of a female-specific cDNA derived from a developmentally regulated mRNA in the human blood fluke Schistosoma mansoni.</title>
        <authorList>
            <person name="Bobek L."/>
            <person name="Rekosh D.M."/>
            <person name="van Keulen H."/>
            <person name="LoVerde P.T."/>
        </authorList>
    </citation>
    <scope>NUCLEOTIDE SEQUENCE [MRNA]</scope>
</reference>
<sequence>MKQSLTLVFLVAIGYATAHTTSHDYSGGYGGGCYGSDCDSGYGDSGYGGGCTGGDCGGGYGGGYGGGCSGGDCGNYGGGYGGDCNGGDCGNYGGGYGGGNGGGCSGGNCGGGFDEAFPAPYGGDYGNGGNGFGKGGSKGNNYGKGYGGGSGKGKGGGKGGKGGKGGTYKPSHYGGGY</sequence>
<evidence type="ECO:0000256" key="1">
    <source>
        <dbReference type="SAM" id="MobiDB-lite"/>
    </source>
</evidence>
<evidence type="ECO:0000305" key="2"/>
<proteinExistence type="evidence at transcript level"/>
<feature type="signal peptide">
    <location>
        <begin position="1"/>
        <end position="18"/>
    </location>
</feature>
<feature type="chain" id="PRO_0000021153" description="Eggshell protein">
    <location>
        <begin position="19"/>
        <end position="177"/>
    </location>
</feature>
<feature type="repeat" description="1">
    <location>
        <begin position="25"/>
        <end position="41"/>
    </location>
</feature>
<feature type="repeat" description="2">
    <location>
        <begin position="42"/>
        <end position="59"/>
    </location>
</feature>
<feature type="repeat" description="3">
    <location>
        <begin position="60"/>
        <end position="75"/>
    </location>
</feature>
<feature type="repeat" description="4">
    <location>
        <begin position="76"/>
        <end position="91"/>
    </location>
</feature>
<feature type="repeat" description="5">
    <location>
        <begin position="92"/>
        <end position="112"/>
    </location>
</feature>
<feature type="region of interest" description="5 X approximate tandem repeats">
    <location>
        <begin position="25"/>
        <end position="112"/>
    </location>
</feature>
<feature type="region of interest" description="Disordered" evidence="1">
    <location>
        <begin position="149"/>
        <end position="177"/>
    </location>
</feature>
<feature type="compositionally biased region" description="Gly residues" evidence="1">
    <location>
        <begin position="149"/>
        <end position="166"/>
    </location>
</feature>
<feature type="sequence conflict" description="In Ref. 2; AAA74695." evidence="2" ref="2">
    <original>H</original>
    <variation>Y</variation>
    <location>
        <position position="19"/>
    </location>
</feature>
<feature type="sequence conflict" description="In Ref. 2; AAA74695." evidence="2" ref="2">
    <original>G</original>
    <variation>S</variation>
    <location>
        <position position="54"/>
    </location>
</feature>
<feature type="sequence conflict" description="In Ref. 2; AAA74695." evidence="2" ref="2">
    <original>F</original>
    <variation>L</variation>
    <location>
        <position position="117"/>
    </location>
</feature>